<evidence type="ECO:0000255" key="1">
    <source>
        <dbReference type="HAMAP-Rule" id="MF_01371"/>
    </source>
</evidence>
<evidence type="ECO:0000305" key="2"/>
<accession>B7N0U2</accession>
<proteinExistence type="inferred from homology"/>
<dbReference type="EMBL" id="CU928162">
    <property type="protein sequence ID" value="CAR09960.1"/>
    <property type="molecule type" value="Genomic_DNA"/>
</dbReference>
<dbReference type="RefSeq" id="WP_001140433.1">
    <property type="nucleotide sequence ID" value="NC_011745.1"/>
</dbReference>
<dbReference type="SMR" id="B7N0U2"/>
<dbReference type="GeneID" id="93778685"/>
<dbReference type="KEGG" id="ecq:ECED1_3965"/>
<dbReference type="HOGENOM" id="CLU_131047_1_4_6"/>
<dbReference type="Proteomes" id="UP000000748">
    <property type="component" value="Chromosome"/>
</dbReference>
<dbReference type="GO" id="GO:0022625">
    <property type="term" value="C:cytosolic large ribosomal subunit"/>
    <property type="evidence" value="ECO:0007669"/>
    <property type="project" value="TreeGrafter"/>
</dbReference>
<dbReference type="GO" id="GO:0003735">
    <property type="term" value="F:structural constituent of ribosome"/>
    <property type="evidence" value="ECO:0007669"/>
    <property type="project" value="InterPro"/>
</dbReference>
<dbReference type="GO" id="GO:0006412">
    <property type="term" value="P:translation"/>
    <property type="evidence" value="ECO:0007669"/>
    <property type="project" value="UniProtKB-UniRule"/>
</dbReference>
<dbReference type="CDD" id="cd01658">
    <property type="entry name" value="Ribosomal_L30"/>
    <property type="match status" value="1"/>
</dbReference>
<dbReference type="FunFam" id="3.30.1390.20:FF:000001">
    <property type="entry name" value="50S ribosomal protein L30"/>
    <property type="match status" value="1"/>
</dbReference>
<dbReference type="Gene3D" id="3.30.1390.20">
    <property type="entry name" value="Ribosomal protein L30, ferredoxin-like fold domain"/>
    <property type="match status" value="1"/>
</dbReference>
<dbReference type="HAMAP" id="MF_01371_B">
    <property type="entry name" value="Ribosomal_uL30_B"/>
    <property type="match status" value="1"/>
</dbReference>
<dbReference type="InterPro" id="IPR036919">
    <property type="entry name" value="Ribo_uL30_ferredoxin-like_sf"/>
</dbReference>
<dbReference type="InterPro" id="IPR005996">
    <property type="entry name" value="Ribosomal_uL30_bac-type"/>
</dbReference>
<dbReference type="InterPro" id="IPR018038">
    <property type="entry name" value="Ribosomal_uL30_CS"/>
</dbReference>
<dbReference type="InterPro" id="IPR016082">
    <property type="entry name" value="Ribosomal_uL30_ferredoxin-like"/>
</dbReference>
<dbReference type="NCBIfam" id="TIGR01308">
    <property type="entry name" value="rpmD_bact"/>
    <property type="match status" value="1"/>
</dbReference>
<dbReference type="PANTHER" id="PTHR15892:SF2">
    <property type="entry name" value="LARGE RIBOSOMAL SUBUNIT PROTEIN UL30M"/>
    <property type="match status" value="1"/>
</dbReference>
<dbReference type="PANTHER" id="PTHR15892">
    <property type="entry name" value="MITOCHONDRIAL RIBOSOMAL PROTEIN L30"/>
    <property type="match status" value="1"/>
</dbReference>
<dbReference type="Pfam" id="PF00327">
    <property type="entry name" value="Ribosomal_L30"/>
    <property type="match status" value="1"/>
</dbReference>
<dbReference type="PIRSF" id="PIRSF002211">
    <property type="entry name" value="Ribosomal_L30_bac-type"/>
    <property type="match status" value="1"/>
</dbReference>
<dbReference type="SUPFAM" id="SSF55129">
    <property type="entry name" value="Ribosomal protein L30p/L7e"/>
    <property type="match status" value="1"/>
</dbReference>
<dbReference type="PROSITE" id="PS00634">
    <property type="entry name" value="RIBOSOMAL_L30"/>
    <property type="match status" value="1"/>
</dbReference>
<gene>
    <name evidence="1" type="primary">rpmD</name>
    <name type="ordered locus">ECED1_3965</name>
</gene>
<feature type="chain" id="PRO_1000184144" description="Large ribosomal subunit protein uL30">
    <location>
        <begin position="1"/>
        <end position="59"/>
    </location>
</feature>
<keyword id="KW-0687">Ribonucleoprotein</keyword>
<keyword id="KW-0689">Ribosomal protein</keyword>
<name>RL30_ECO81</name>
<comment type="subunit">
    <text evidence="1">Part of the 50S ribosomal subunit.</text>
</comment>
<comment type="similarity">
    <text evidence="1">Belongs to the universal ribosomal protein uL30 family.</text>
</comment>
<reference key="1">
    <citation type="journal article" date="2009" name="PLoS Genet.">
        <title>Organised genome dynamics in the Escherichia coli species results in highly diverse adaptive paths.</title>
        <authorList>
            <person name="Touchon M."/>
            <person name="Hoede C."/>
            <person name="Tenaillon O."/>
            <person name="Barbe V."/>
            <person name="Baeriswyl S."/>
            <person name="Bidet P."/>
            <person name="Bingen E."/>
            <person name="Bonacorsi S."/>
            <person name="Bouchier C."/>
            <person name="Bouvet O."/>
            <person name="Calteau A."/>
            <person name="Chiapello H."/>
            <person name="Clermont O."/>
            <person name="Cruveiller S."/>
            <person name="Danchin A."/>
            <person name="Diard M."/>
            <person name="Dossat C."/>
            <person name="Karoui M.E."/>
            <person name="Frapy E."/>
            <person name="Garry L."/>
            <person name="Ghigo J.M."/>
            <person name="Gilles A.M."/>
            <person name="Johnson J."/>
            <person name="Le Bouguenec C."/>
            <person name="Lescat M."/>
            <person name="Mangenot S."/>
            <person name="Martinez-Jehanne V."/>
            <person name="Matic I."/>
            <person name="Nassif X."/>
            <person name="Oztas S."/>
            <person name="Petit M.A."/>
            <person name="Pichon C."/>
            <person name="Rouy Z."/>
            <person name="Ruf C.S."/>
            <person name="Schneider D."/>
            <person name="Tourret J."/>
            <person name="Vacherie B."/>
            <person name="Vallenet D."/>
            <person name="Medigue C."/>
            <person name="Rocha E.P.C."/>
            <person name="Denamur E."/>
        </authorList>
    </citation>
    <scope>NUCLEOTIDE SEQUENCE [LARGE SCALE GENOMIC DNA]</scope>
    <source>
        <strain>ED1a</strain>
    </source>
</reference>
<sequence length="59" mass="6542">MAKTIKITQTRSAIGRLPKHKATLLGLGLRRIGHTVEREDTPAIRGMINAVSFMVKVEE</sequence>
<organism>
    <name type="scientific">Escherichia coli O81 (strain ED1a)</name>
    <dbReference type="NCBI Taxonomy" id="585397"/>
    <lineage>
        <taxon>Bacteria</taxon>
        <taxon>Pseudomonadati</taxon>
        <taxon>Pseudomonadota</taxon>
        <taxon>Gammaproteobacteria</taxon>
        <taxon>Enterobacterales</taxon>
        <taxon>Enterobacteriaceae</taxon>
        <taxon>Escherichia</taxon>
    </lineage>
</organism>
<protein>
    <recommendedName>
        <fullName evidence="1">Large ribosomal subunit protein uL30</fullName>
    </recommendedName>
    <alternativeName>
        <fullName evidence="2">50S ribosomal protein L30</fullName>
    </alternativeName>
</protein>